<comment type="function">
    <text evidence="1">Catalyzes the 2'-O-methylation at nucleotide C2498 in 23S rRNA.</text>
</comment>
<comment type="catalytic activity">
    <reaction evidence="1">
        <text>cytidine(2498) in 23S rRNA + S-adenosyl-L-methionine = 2'-O-methylcytidine(2498) in 23S rRNA + S-adenosyl-L-homocysteine + H(+)</text>
        <dbReference type="Rhea" id="RHEA:42788"/>
        <dbReference type="Rhea" id="RHEA-COMP:10244"/>
        <dbReference type="Rhea" id="RHEA-COMP:10245"/>
        <dbReference type="ChEBI" id="CHEBI:15378"/>
        <dbReference type="ChEBI" id="CHEBI:57856"/>
        <dbReference type="ChEBI" id="CHEBI:59789"/>
        <dbReference type="ChEBI" id="CHEBI:74495"/>
        <dbReference type="ChEBI" id="CHEBI:82748"/>
        <dbReference type="EC" id="2.1.1.186"/>
    </reaction>
</comment>
<comment type="subunit">
    <text evidence="1">Monomer.</text>
</comment>
<comment type="subcellular location">
    <subcellularLocation>
        <location evidence="1">Cytoplasm</location>
    </subcellularLocation>
</comment>
<comment type="similarity">
    <text evidence="1">Belongs to the class I-like SAM-binding methyltransferase superfamily. RNA methyltransferase RlmE family. RlmM subfamily.</text>
</comment>
<protein>
    <recommendedName>
        <fullName evidence="1">Ribosomal RNA large subunit methyltransferase M</fullName>
        <ecNumber evidence="1">2.1.1.186</ecNumber>
    </recommendedName>
    <alternativeName>
        <fullName evidence="1">23S rRNA (cytidine2498-2'-O)-methyltransferase</fullName>
    </alternativeName>
    <alternativeName>
        <fullName evidence="1">23S rRNA 2'-O-ribose methyltransferase RlmM</fullName>
    </alternativeName>
</protein>
<organism>
    <name type="scientific">Salmonella agona (strain SL483)</name>
    <dbReference type="NCBI Taxonomy" id="454166"/>
    <lineage>
        <taxon>Bacteria</taxon>
        <taxon>Pseudomonadati</taxon>
        <taxon>Pseudomonadota</taxon>
        <taxon>Gammaproteobacteria</taxon>
        <taxon>Enterobacterales</taxon>
        <taxon>Enterobacteriaceae</taxon>
        <taxon>Salmonella</taxon>
    </lineage>
</organism>
<sequence length="366" mass="41986">MNKVVLLCRPGFEKECAAEITDKAGKREIFGFARVKENAGYVIYECYQPEDGEKLISELPFSSLIFARQWFVVGELLQHLPPEDRITPIVGMLQGVVEKGGELRVEVADTNESKELMKFCRKFTVPLRAALRDAGVLTNYETPKRPVVHVFFIAPGCCYTGYSLAHNNSPFYMGIPRLKFPSDAPSRSTLKLEEALHVFIPEDEWDERLANGMYAVDLGACPGGWTYQLVKRNMWVYSVDNGPMAQSLMDTGQVTWLREDGFRYRPNRNNISWMVCDMVEKPAKVTALMAQWLVNGWCRETIFNLKLPMKKRYEEVSHNLAYLQAQLDEHGVNAQIQARQLYHDREEVTVHVRRLWAAVGGRRDER</sequence>
<feature type="chain" id="PRO_1000201525" description="Ribosomal RNA large subunit methyltransferase M">
    <location>
        <begin position="1"/>
        <end position="366"/>
    </location>
</feature>
<feature type="active site" description="Proton acceptor" evidence="1">
    <location>
        <position position="306"/>
    </location>
</feature>
<feature type="binding site" evidence="1">
    <location>
        <position position="188"/>
    </location>
    <ligand>
        <name>S-adenosyl-L-methionine</name>
        <dbReference type="ChEBI" id="CHEBI:59789"/>
    </ligand>
</feature>
<feature type="binding site" evidence="1">
    <location>
        <begin position="221"/>
        <end position="224"/>
    </location>
    <ligand>
        <name>S-adenosyl-L-methionine</name>
        <dbReference type="ChEBI" id="CHEBI:59789"/>
    </ligand>
</feature>
<feature type="binding site" evidence="1">
    <location>
        <position position="240"/>
    </location>
    <ligand>
        <name>S-adenosyl-L-methionine</name>
        <dbReference type="ChEBI" id="CHEBI:59789"/>
    </ligand>
</feature>
<feature type="binding site" evidence="1">
    <location>
        <position position="260"/>
    </location>
    <ligand>
        <name>S-adenosyl-L-methionine</name>
        <dbReference type="ChEBI" id="CHEBI:59789"/>
    </ligand>
</feature>
<feature type="binding site" evidence="1">
    <location>
        <position position="277"/>
    </location>
    <ligand>
        <name>S-adenosyl-L-methionine</name>
        <dbReference type="ChEBI" id="CHEBI:59789"/>
    </ligand>
</feature>
<reference key="1">
    <citation type="journal article" date="2011" name="J. Bacteriol.">
        <title>Comparative genomics of 28 Salmonella enterica isolates: evidence for CRISPR-mediated adaptive sublineage evolution.</title>
        <authorList>
            <person name="Fricke W.F."/>
            <person name="Mammel M.K."/>
            <person name="McDermott P.F."/>
            <person name="Tartera C."/>
            <person name="White D.G."/>
            <person name="Leclerc J.E."/>
            <person name="Ravel J."/>
            <person name="Cebula T.A."/>
        </authorList>
    </citation>
    <scope>NUCLEOTIDE SEQUENCE [LARGE SCALE GENOMIC DNA]</scope>
    <source>
        <strain>SL483</strain>
    </source>
</reference>
<name>RLMM_SALA4</name>
<accession>B5F4S7</accession>
<proteinExistence type="inferred from homology"/>
<gene>
    <name evidence="1" type="primary">rlmM</name>
    <name type="ordered locus">SeAg_B3125</name>
</gene>
<keyword id="KW-0963">Cytoplasm</keyword>
<keyword id="KW-0489">Methyltransferase</keyword>
<keyword id="KW-0698">rRNA processing</keyword>
<keyword id="KW-0949">S-adenosyl-L-methionine</keyword>
<keyword id="KW-0808">Transferase</keyword>
<dbReference type="EC" id="2.1.1.186" evidence="1"/>
<dbReference type="EMBL" id="CP001138">
    <property type="protein sequence ID" value="ACH52572.1"/>
    <property type="molecule type" value="Genomic_DNA"/>
</dbReference>
<dbReference type="RefSeq" id="WP_001045497.1">
    <property type="nucleotide sequence ID" value="NC_011149.1"/>
</dbReference>
<dbReference type="SMR" id="B5F4S7"/>
<dbReference type="KEGG" id="sea:SeAg_B3125"/>
<dbReference type="HOGENOM" id="CLU_043780_0_0_6"/>
<dbReference type="Proteomes" id="UP000008819">
    <property type="component" value="Chromosome"/>
</dbReference>
<dbReference type="GO" id="GO:0005737">
    <property type="term" value="C:cytoplasm"/>
    <property type="evidence" value="ECO:0007669"/>
    <property type="project" value="UniProtKB-SubCell"/>
</dbReference>
<dbReference type="GO" id="GO:0008757">
    <property type="term" value="F:S-adenosylmethionine-dependent methyltransferase activity"/>
    <property type="evidence" value="ECO:0007669"/>
    <property type="project" value="UniProtKB-UniRule"/>
</dbReference>
<dbReference type="GO" id="GO:0032259">
    <property type="term" value="P:methylation"/>
    <property type="evidence" value="ECO:0007669"/>
    <property type="project" value="UniProtKB-KW"/>
</dbReference>
<dbReference type="GO" id="GO:0006364">
    <property type="term" value="P:rRNA processing"/>
    <property type="evidence" value="ECO:0007669"/>
    <property type="project" value="UniProtKB-UniRule"/>
</dbReference>
<dbReference type="FunFam" id="3.30.2300.20:FF:000001">
    <property type="entry name" value="Ribosomal RNA large subunit methyltransferase M"/>
    <property type="match status" value="1"/>
</dbReference>
<dbReference type="FunFam" id="3.30.70.2810:FF:000001">
    <property type="entry name" value="Ribosomal RNA large subunit methyltransferase M"/>
    <property type="match status" value="1"/>
</dbReference>
<dbReference type="FunFam" id="3.40.50.150:FF:000020">
    <property type="entry name" value="Ribosomal RNA large subunit methyltransferase M"/>
    <property type="match status" value="1"/>
</dbReference>
<dbReference type="Gene3D" id="3.30.2300.20">
    <property type="match status" value="1"/>
</dbReference>
<dbReference type="Gene3D" id="3.30.70.2810">
    <property type="match status" value="1"/>
</dbReference>
<dbReference type="Gene3D" id="3.40.50.150">
    <property type="entry name" value="Vaccinia Virus protein VP39"/>
    <property type="match status" value="1"/>
</dbReference>
<dbReference type="HAMAP" id="MF_01551">
    <property type="entry name" value="23SrRNA_methyltr_M"/>
    <property type="match status" value="1"/>
</dbReference>
<dbReference type="InterPro" id="IPR040739">
    <property type="entry name" value="RlmM_FDX"/>
</dbReference>
<dbReference type="InterPro" id="IPR048646">
    <property type="entry name" value="RlmM_THUMP-like"/>
</dbReference>
<dbReference type="InterPro" id="IPR002877">
    <property type="entry name" value="RNA_MeTrfase_FtsJ_dom"/>
</dbReference>
<dbReference type="InterPro" id="IPR011224">
    <property type="entry name" value="rRNA_MeTrfase_M"/>
</dbReference>
<dbReference type="InterPro" id="IPR029063">
    <property type="entry name" value="SAM-dependent_MTases_sf"/>
</dbReference>
<dbReference type="NCBIfam" id="NF008734">
    <property type="entry name" value="PRK11760.1"/>
    <property type="match status" value="1"/>
</dbReference>
<dbReference type="PANTHER" id="PTHR37524">
    <property type="entry name" value="RIBOSOMAL RNA LARGE SUBUNIT METHYLTRANSFERASE M"/>
    <property type="match status" value="1"/>
</dbReference>
<dbReference type="PANTHER" id="PTHR37524:SF2">
    <property type="entry name" value="RIBOSOMAL RNA METHYLTRANSFERASE FTSJ DOMAIN-CONTAINING PROTEIN"/>
    <property type="match status" value="1"/>
</dbReference>
<dbReference type="Pfam" id="PF01728">
    <property type="entry name" value="FtsJ"/>
    <property type="match status" value="1"/>
</dbReference>
<dbReference type="Pfam" id="PF18125">
    <property type="entry name" value="RlmM_FDX"/>
    <property type="match status" value="1"/>
</dbReference>
<dbReference type="Pfam" id="PF21239">
    <property type="entry name" value="RLMM_N"/>
    <property type="match status" value="1"/>
</dbReference>
<dbReference type="PIRSF" id="PIRSF028774">
    <property type="entry name" value="UCP028774"/>
    <property type="match status" value="1"/>
</dbReference>
<dbReference type="SUPFAM" id="SSF53335">
    <property type="entry name" value="S-adenosyl-L-methionine-dependent methyltransferases"/>
    <property type="match status" value="1"/>
</dbReference>
<evidence type="ECO:0000255" key="1">
    <source>
        <dbReference type="HAMAP-Rule" id="MF_01551"/>
    </source>
</evidence>